<feature type="chain" id="PRO_0000126913" description="Phenylalanine--tRNA ligase beta subunit">
    <location>
        <begin position="1"/>
        <end position="835"/>
    </location>
</feature>
<feature type="domain" description="tRNA-binding" evidence="1">
    <location>
        <begin position="44"/>
        <end position="158"/>
    </location>
</feature>
<feature type="domain" description="B5" evidence="1">
    <location>
        <begin position="414"/>
        <end position="493"/>
    </location>
</feature>
<feature type="domain" description="FDX-ACB" evidence="1">
    <location>
        <begin position="741"/>
        <end position="834"/>
    </location>
</feature>
<feature type="binding site" evidence="1">
    <location>
        <position position="471"/>
    </location>
    <ligand>
        <name>Mg(2+)</name>
        <dbReference type="ChEBI" id="CHEBI:18420"/>
        <note>shared with alpha subunit</note>
    </ligand>
</feature>
<feature type="binding site" evidence="1">
    <location>
        <position position="477"/>
    </location>
    <ligand>
        <name>Mg(2+)</name>
        <dbReference type="ChEBI" id="CHEBI:18420"/>
        <note>shared with alpha subunit</note>
    </ligand>
</feature>
<feature type="binding site" evidence="1">
    <location>
        <position position="480"/>
    </location>
    <ligand>
        <name>Mg(2+)</name>
        <dbReference type="ChEBI" id="CHEBI:18420"/>
        <note>shared with alpha subunit</note>
    </ligand>
</feature>
<feature type="binding site" evidence="1">
    <location>
        <position position="481"/>
    </location>
    <ligand>
        <name>Mg(2+)</name>
        <dbReference type="ChEBI" id="CHEBI:18420"/>
        <note>shared with alpha subunit</note>
    </ligand>
</feature>
<evidence type="ECO:0000255" key="1">
    <source>
        <dbReference type="HAMAP-Rule" id="MF_00283"/>
    </source>
</evidence>
<evidence type="ECO:0000305" key="2"/>
<proteinExistence type="inferred from homology"/>
<protein>
    <recommendedName>
        <fullName evidence="1">Phenylalanine--tRNA ligase beta subunit</fullName>
        <ecNumber evidence="1">6.1.1.20</ecNumber>
    </recommendedName>
    <alternativeName>
        <fullName evidence="1">Phenylalanyl-tRNA synthetase beta subunit</fullName>
        <shortName evidence="1">PheRS</shortName>
    </alternativeName>
</protein>
<accession>Q9CC16</accession>
<gene>
    <name evidence="1" type="primary">pheT</name>
    <name type="ordered locus">ML1402</name>
</gene>
<comment type="catalytic activity">
    <reaction evidence="1">
        <text>tRNA(Phe) + L-phenylalanine + ATP = L-phenylalanyl-tRNA(Phe) + AMP + diphosphate + H(+)</text>
        <dbReference type="Rhea" id="RHEA:19413"/>
        <dbReference type="Rhea" id="RHEA-COMP:9668"/>
        <dbReference type="Rhea" id="RHEA-COMP:9699"/>
        <dbReference type="ChEBI" id="CHEBI:15378"/>
        <dbReference type="ChEBI" id="CHEBI:30616"/>
        <dbReference type="ChEBI" id="CHEBI:33019"/>
        <dbReference type="ChEBI" id="CHEBI:58095"/>
        <dbReference type="ChEBI" id="CHEBI:78442"/>
        <dbReference type="ChEBI" id="CHEBI:78531"/>
        <dbReference type="ChEBI" id="CHEBI:456215"/>
        <dbReference type="EC" id="6.1.1.20"/>
    </reaction>
</comment>
<comment type="cofactor">
    <cofactor evidence="1">
        <name>Mg(2+)</name>
        <dbReference type="ChEBI" id="CHEBI:18420"/>
    </cofactor>
    <text evidence="1">Binds 2 magnesium ions per tetramer.</text>
</comment>
<comment type="subunit">
    <text evidence="1">Tetramer of two alpha and two beta subunits.</text>
</comment>
<comment type="subcellular location">
    <subcellularLocation>
        <location evidence="1">Cytoplasm</location>
    </subcellularLocation>
</comment>
<comment type="similarity">
    <text evidence="1">Belongs to the phenylalanyl-tRNA synthetase beta subunit family. Type 1 subfamily.</text>
</comment>
<comment type="sequence caution" evidence="2">
    <conflict type="erroneous initiation">
        <sequence resource="EMBL-CDS" id="CAC30353"/>
    </conflict>
</comment>
<name>SYFB_MYCLE</name>
<reference key="1">
    <citation type="journal article" date="2001" name="Nature">
        <title>Massive gene decay in the leprosy bacillus.</title>
        <authorList>
            <person name="Cole S.T."/>
            <person name="Eiglmeier K."/>
            <person name="Parkhill J."/>
            <person name="James K.D."/>
            <person name="Thomson N.R."/>
            <person name="Wheeler P.R."/>
            <person name="Honore N."/>
            <person name="Garnier T."/>
            <person name="Churcher C.M."/>
            <person name="Harris D.E."/>
            <person name="Mungall K.L."/>
            <person name="Basham D."/>
            <person name="Brown D."/>
            <person name="Chillingworth T."/>
            <person name="Connor R."/>
            <person name="Davies R.M."/>
            <person name="Devlin K."/>
            <person name="Duthoy S."/>
            <person name="Feltwell T."/>
            <person name="Fraser A."/>
            <person name="Hamlin N."/>
            <person name="Holroyd S."/>
            <person name="Hornsby T."/>
            <person name="Jagels K."/>
            <person name="Lacroix C."/>
            <person name="Maclean J."/>
            <person name="Moule S."/>
            <person name="Murphy L.D."/>
            <person name="Oliver K."/>
            <person name="Quail M.A."/>
            <person name="Rajandream M.A."/>
            <person name="Rutherford K.M."/>
            <person name="Rutter S."/>
            <person name="Seeger K."/>
            <person name="Simon S."/>
            <person name="Simmonds M."/>
            <person name="Skelton J."/>
            <person name="Squares R."/>
            <person name="Squares S."/>
            <person name="Stevens K."/>
            <person name="Taylor K."/>
            <person name="Whitehead S."/>
            <person name="Woodward J.R."/>
            <person name="Barrell B.G."/>
        </authorList>
    </citation>
    <scope>NUCLEOTIDE SEQUENCE [LARGE SCALE GENOMIC DNA]</scope>
    <source>
        <strain>TN</strain>
    </source>
</reference>
<keyword id="KW-0030">Aminoacyl-tRNA synthetase</keyword>
<keyword id="KW-0067">ATP-binding</keyword>
<keyword id="KW-0963">Cytoplasm</keyword>
<keyword id="KW-0436">Ligase</keyword>
<keyword id="KW-0460">Magnesium</keyword>
<keyword id="KW-0479">Metal-binding</keyword>
<keyword id="KW-0547">Nucleotide-binding</keyword>
<keyword id="KW-0648">Protein biosynthesis</keyword>
<keyword id="KW-1185">Reference proteome</keyword>
<keyword id="KW-0694">RNA-binding</keyword>
<keyword id="KW-0820">tRNA-binding</keyword>
<dbReference type="EC" id="6.1.1.20" evidence="1"/>
<dbReference type="EMBL" id="AL583922">
    <property type="protein sequence ID" value="CAC30353.1"/>
    <property type="status" value="ALT_INIT"/>
    <property type="molecule type" value="Genomic_DNA"/>
</dbReference>
<dbReference type="PIR" id="D87084">
    <property type="entry name" value="D87084"/>
</dbReference>
<dbReference type="RefSeq" id="WP_041322770.1">
    <property type="nucleotide sequence ID" value="NC_002677.1"/>
</dbReference>
<dbReference type="SMR" id="Q9CC16"/>
<dbReference type="STRING" id="272631.gene:17575241"/>
<dbReference type="KEGG" id="mle:ML1402"/>
<dbReference type="Leproma" id="ML1402"/>
<dbReference type="eggNOG" id="COG0072">
    <property type="taxonomic scope" value="Bacteria"/>
</dbReference>
<dbReference type="eggNOG" id="COG0073">
    <property type="taxonomic scope" value="Bacteria"/>
</dbReference>
<dbReference type="HOGENOM" id="CLU_016891_0_0_11"/>
<dbReference type="Proteomes" id="UP000000806">
    <property type="component" value="Chromosome"/>
</dbReference>
<dbReference type="GO" id="GO:0009328">
    <property type="term" value="C:phenylalanine-tRNA ligase complex"/>
    <property type="evidence" value="ECO:0007669"/>
    <property type="project" value="TreeGrafter"/>
</dbReference>
<dbReference type="GO" id="GO:0005524">
    <property type="term" value="F:ATP binding"/>
    <property type="evidence" value="ECO:0007669"/>
    <property type="project" value="UniProtKB-UniRule"/>
</dbReference>
<dbReference type="GO" id="GO:0000287">
    <property type="term" value="F:magnesium ion binding"/>
    <property type="evidence" value="ECO:0007669"/>
    <property type="project" value="UniProtKB-UniRule"/>
</dbReference>
<dbReference type="GO" id="GO:0004826">
    <property type="term" value="F:phenylalanine-tRNA ligase activity"/>
    <property type="evidence" value="ECO:0007669"/>
    <property type="project" value="UniProtKB-UniRule"/>
</dbReference>
<dbReference type="GO" id="GO:0000049">
    <property type="term" value="F:tRNA binding"/>
    <property type="evidence" value="ECO:0007669"/>
    <property type="project" value="UniProtKB-KW"/>
</dbReference>
<dbReference type="GO" id="GO:0006432">
    <property type="term" value="P:phenylalanyl-tRNA aminoacylation"/>
    <property type="evidence" value="ECO:0007669"/>
    <property type="project" value="UniProtKB-UniRule"/>
</dbReference>
<dbReference type="CDD" id="cd00769">
    <property type="entry name" value="PheRS_beta_core"/>
    <property type="match status" value="1"/>
</dbReference>
<dbReference type="CDD" id="cd02796">
    <property type="entry name" value="tRNA_bind_bactPheRS"/>
    <property type="match status" value="1"/>
</dbReference>
<dbReference type="FunFam" id="3.30.70.380:FF:000001">
    <property type="entry name" value="Phenylalanine--tRNA ligase beta subunit"/>
    <property type="match status" value="1"/>
</dbReference>
<dbReference type="FunFam" id="3.30.930.10:FF:000130">
    <property type="entry name" value="Phenylalanine--tRNA ligase beta subunit"/>
    <property type="match status" value="1"/>
</dbReference>
<dbReference type="Gene3D" id="3.30.56.10">
    <property type="match status" value="2"/>
</dbReference>
<dbReference type="Gene3D" id="3.30.930.10">
    <property type="entry name" value="Bira Bifunctional Protein, Domain 2"/>
    <property type="match status" value="1"/>
</dbReference>
<dbReference type="Gene3D" id="3.30.70.380">
    <property type="entry name" value="Ferrodoxin-fold anticodon-binding domain"/>
    <property type="match status" value="1"/>
</dbReference>
<dbReference type="Gene3D" id="2.40.50.140">
    <property type="entry name" value="Nucleic acid-binding proteins"/>
    <property type="match status" value="1"/>
</dbReference>
<dbReference type="Gene3D" id="3.50.40.10">
    <property type="entry name" value="Phenylalanyl-trna Synthetase, Chain B, domain 3"/>
    <property type="match status" value="1"/>
</dbReference>
<dbReference type="HAMAP" id="MF_00283">
    <property type="entry name" value="Phe_tRNA_synth_beta1"/>
    <property type="match status" value="1"/>
</dbReference>
<dbReference type="InterPro" id="IPR045864">
    <property type="entry name" value="aa-tRNA-synth_II/BPL/LPL"/>
</dbReference>
<dbReference type="InterPro" id="IPR005146">
    <property type="entry name" value="B3/B4_tRNA-bd"/>
</dbReference>
<dbReference type="InterPro" id="IPR009061">
    <property type="entry name" value="DNA-bd_dom_put_sf"/>
</dbReference>
<dbReference type="InterPro" id="IPR005121">
    <property type="entry name" value="Fdx_antiC-bd"/>
</dbReference>
<dbReference type="InterPro" id="IPR036690">
    <property type="entry name" value="Fdx_antiC-bd_sf"/>
</dbReference>
<dbReference type="InterPro" id="IPR012340">
    <property type="entry name" value="NA-bd_OB-fold"/>
</dbReference>
<dbReference type="InterPro" id="IPR045060">
    <property type="entry name" value="Phe-tRNA-ligase_IIc_bsu"/>
</dbReference>
<dbReference type="InterPro" id="IPR004532">
    <property type="entry name" value="Phe-tRNA-ligase_IIc_bsu_bact"/>
</dbReference>
<dbReference type="InterPro" id="IPR020825">
    <property type="entry name" value="Phe-tRNA_synthase-like_B3/B4"/>
</dbReference>
<dbReference type="InterPro" id="IPR041616">
    <property type="entry name" value="PheRS_beta_core"/>
</dbReference>
<dbReference type="InterPro" id="IPR002547">
    <property type="entry name" value="tRNA-bd_dom"/>
</dbReference>
<dbReference type="InterPro" id="IPR033714">
    <property type="entry name" value="tRNA_bind_bactPheRS"/>
</dbReference>
<dbReference type="InterPro" id="IPR005147">
    <property type="entry name" value="tRNA_synthase_B5-dom"/>
</dbReference>
<dbReference type="NCBIfam" id="TIGR00472">
    <property type="entry name" value="pheT_bact"/>
    <property type="match status" value="1"/>
</dbReference>
<dbReference type="PANTHER" id="PTHR10947:SF0">
    <property type="entry name" value="PHENYLALANINE--TRNA LIGASE BETA SUBUNIT"/>
    <property type="match status" value="1"/>
</dbReference>
<dbReference type="PANTHER" id="PTHR10947">
    <property type="entry name" value="PHENYLALANYL-TRNA SYNTHETASE BETA CHAIN AND LEUCINE-RICH REPEAT-CONTAINING PROTEIN 47"/>
    <property type="match status" value="1"/>
</dbReference>
<dbReference type="Pfam" id="PF03483">
    <property type="entry name" value="B3_4"/>
    <property type="match status" value="1"/>
</dbReference>
<dbReference type="Pfam" id="PF03484">
    <property type="entry name" value="B5"/>
    <property type="match status" value="1"/>
</dbReference>
<dbReference type="Pfam" id="PF03147">
    <property type="entry name" value="FDX-ACB"/>
    <property type="match status" value="1"/>
</dbReference>
<dbReference type="Pfam" id="PF01588">
    <property type="entry name" value="tRNA_bind"/>
    <property type="match status" value="1"/>
</dbReference>
<dbReference type="Pfam" id="PF17759">
    <property type="entry name" value="tRNA_synthFbeta"/>
    <property type="match status" value="1"/>
</dbReference>
<dbReference type="SMART" id="SM00873">
    <property type="entry name" value="B3_4"/>
    <property type="match status" value="1"/>
</dbReference>
<dbReference type="SMART" id="SM00874">
    <property type="entry name" value="B5"/>
    <property type="match status" value="1"/>
</dbReference>
<dbReference type="SMART" id="SM00896">
    <property type="entry name" value="FDX-ACB"/>
    <property type="match status" value="1"/>
</dbReference>
<dbReference type="SUPFAM" id="SSF54991">
    <property type="entry name" value="Anticodon-binding domain of PheRS"/>
    <property type="match status" value="1"/>
</dbReference>
<dbReference type="SUPFAM" id="SSF55681">
    <property type="entry name" value="Class II aaRS and biotin synthetases"/>
    <property type="match status" value="1"/>
</dbReference>
<dbReference type="SUPFAM" id="SSF50249">
    <property type="entry name" value="Nucleic acid-binding proteins"/>
    <property type="match status" value="1"/>
</dbReference>
<dbReference type="SUPFAM" id="SSF56037">
    <property type="entry name" value="PheT/TilS domain"/>
    <property type="match status" value="1"/>
</dbReference>
<dbReference type="SUPFAM" id="SSF46955">
    <property type="entry name" value="Putative DNA-binding domain"/>
    <property type="match status" value="1"/>
</dbReference>
<dbReference type="PROSITE" id="PS51483">
    <property type="entry name" value="B5"/>
    <property type="match status" value="1"/>
</dbReference>
<dbReference type="PROSITE" id="PS51447">
    <property type="entry name" value="FDX_ACB"/>
    <property type="match status" value="1"/>
</dbReference>
<dbReference type="PROSITE" id="PS50886">
    <property type="entry name" value="TRBD"/>
    <property type="match status" value="1"/>
</dbReference>
<organism>
    <name type="scientific">Mycobacterium leprae (strain TN)</name>
    <dbReference type="NCBI Taxonomy" id="272631"/>
    <lineage>
        <taxon>Bacteria</taxon>
        <taxon>Bacillati</taxon>
        <taxon>Actinomycetota</taxon>
        <taxon>Actinomycetes</taxon>
        <taxon>Mycobacteriales</taxon>
        <taxon>Mycobacteriaceae</taxon>
        <taxon>Mycobacterium</taxon>
    </lineage>
</organism>
<sequence length="835" mass="89290">MRVPYSWLCEVVTVGAPDWDVSASDLKQTLVRIGHEIEEMITVGPVDGPLTVGRVTDIEELTGFKKPIRACVVDVGDGQQHEIICGATNFVVGDLVVVAFPGTTLPDGFAIAACETYGRHSAGMICSAAELRLSTDHSGILVLPPGTALPGADGADVLGLDDVVFRLAITPDRGYCMSVRGLAREIACAYDLAFVDPASDQAVPPLPVGGQAWPVTVQPETGVRRCALRPVTGIDFAAVSPWWLQRRLLLSGIRAISPAVDVTNYVMLELGHPLHAHDRNRITGGFTVRFARPGETIVTIDGIERQLDPVDVLIVDNVTTAAIGGVMGAASTEVRSDSTDVLLEAAVWDPARVSHTQRRLHLPSEAARRYERAVDPAISVAALDRCAMLLADIAGGTVSETLTDWRGSPPRADWSLPPIRIAVDLPDRIAGVVYNQGATTKRLTQIGAVVVDTVSSEGHTLTVTPPSWRPDLLQPSDLVEEVLRLEGLEVIRSVRPLAPAGRGLTAVQKRYRAIGKVLAQSGYVEILPTPFLPADVFDLWGLPADDPRRTTTRVLNPLESNRPQLATTLLPALLEALVSNVSRGIIDVALFAIAQVVEPTEWTGGIGSIPVDRRLTDAEIALLDASLPRQPQHVAAVLAGLREPRGPWGPGRLAEASDAFEAVRIIARVSGVDVFFRAVQYLPWHPGRCAEVFVGETPIGHAGQLHPAVIERAGLPKGICAIELDLAAMPIVEGLPAPQVSPFPAVLQDVSLVVSTQVPAQEVQDAIRDGAGELLEDIQLFDVFTGSQIGEDCKSLTFALRFRAPDRTLTEDDASAARDAAVRHAAERVGATLRT</sequence>